<keyword id="KW-0143">Chaperone</keyword>
<keyword id="KW-0963">Cytoplasm</keyword>
<feature type="chain" id="PRO_1000129636" description="Co-chaperonin GroES">
    <location>
        <begin position="1"/>
        <end position="95"/>
    </location>
</feature>
<evidence type="ECO:0000255" key="1">
    <source>
        <dbReference type="HAMAP-Rule" id="MF_00580"/>
    </source>
</evidence>
<organism>
    <name type="scientific">Chlorobium phaeobacteroides (strain BS1)</name>
    <dbReference type="NCBI Taxonomy" id="331678"/>
    <lineage>
        <taxon>Bacteria</taxon>
        <taxon>Pseudomonadati</taxon>
        <taxon>Chlorobiota</taxon>
        <taxon>Chlorobiia</taxon>
        <taxon>Chlorobiales</taxon>
        <taxon>Chlorobiaceae</taxon>
        <taxon>Chlorobium/Pelodictyon group</taxon>
        <taxon>Chlorobium</taxon>
    </lineage>
</organism>
<name>CH10_CHLPB</name>
<gene>
    <name evidence="1" type="primary">groES</name>
    <name evidence="1" type="synonym">groS</name>
    <name type="ordered locus">Cphamn1_0782</name>
</gene>
<comment type="function">
    <text evidence="1">Together with the chaperonin GroEL, plays an essential role in assisting protein folding. The GroEL-GroES system forms a nano-cage that allows encapsulation of the non-native substrate proteins and provides a physical environment optimized to promote and accelerate protein folding. GroES binds to the apical surface of the GroEL ring, thereby capping the opening of the GroEL channel.</text>
</comment>
<comment type="subunit">
    <text evidence="1">Heptamer of 7 subunits arranged in a ring. Interacts with the chaperonin GroEL.</text>
</comment>
<comment type="subcellular location">
    <subcellularLocation>
        <location evidence="1">Cytoplasm</location>
    </subcellularLocation>
</comment>
<comment type="similarity">
    <text evidence="1">Belongs to the GroES chaperonin family.</text>
</comment>
<accession>B3ENV6</accession>
<reference key="1">
    <citation type="submission" date="2008-06" db="EMBL/GenBank/DDBJ databases">
        <title>Complete sequence of Chlorobium phaeobacteroides BS1.</title>
        <authorList>
            <consortium name="US DOE Joint Genome Institute"/>
            <person name="Lucas S."/>
            <person name="Copeland A."/>
            <person name="Lapidus A."/>
            <person name="Glavina del Rio T."/>
            <person name="Dalin E."/>
            <person name="Tice H."/>
            <person name="Bruce D."/>
            <person name="Goodwin L."/>
            <person name="Pitluck S."/>
            <person name="Schmutz J."/>
            <person name="Larimer F."/>
            <person name="Land M."/>
            <person name="Hauser L."/>
            <person name="Kyrpides N."/>
            <person name="Ovchinnikova G."/>
            <person name="Li T."/>
            <person name="Liu Z."/>
            <person name="Zhao F."/>
            <person name="Overmann J."/>
            <person name="Bryant D.A."/>
            <person name="Richardson P."/>
        </authorList>
    </citation>
    <scope>NUCLEOTIDE SEQUENCE [LARGE SCALE GENOMIC DNA]</scope>
    <source>
        <strain>BS1</strain>
    </source>
</reference>
<proteinExistence type="inferred from homology"/>
<sequence>MNLKPLADRVIVKPAPAEEKTKGGLYIPDTGKEKPQYGEVVAVGAGKVADSGQLLEMQVAVGNKVLYGKYSGTEVAVEGEDYLIMRESDIFAILD</sequence>
<protein>
    <recommendedName>
        <fullName evidence="1">Co-chaperonin GroES</fullName>
    </recommendedName>
    <alternativeName>
        <fullName evidence="1">10 kDa chaperonin</fullName>
    </alternativeName>
    <alternativeName>
        <fullName evidence="1">Chaperonin-10</fullName>
        <shortName evidence="1">Cpn10</shortName>
    </alternativeName>
</protein>
<dbReference type="EMBL" id="CP001101">
    <property type="protein sequence ID" value="ACE03733.1"/>
    <property type="molecule type" value="Genomic_DNA"/>
</dbReference>
<dbReference type="SMR" id="B3ENV6"/>
<dbReference type="STRING" id="331678.Cphamn1_0782"/>
<dbReference type="KEGG" id="cpb:Cphamn1_0782"/>
<dbReference type="eggNOG" id="COG0234">
    <property type="taxonomic scope" value="Bacteria"/>
</dbReference>
<dbReference type="HOGENOM" id="CLU_132825_2_0_10"/>
<dbReference type="OrthoDB" id="9806791at2"/>
<dbReference type="GO" id="GO:0005737">
    <property type="term" value="C:cytoplasm"/>
    <property type="evidence" value="ECO:0007669"/>
    <property type="project" value="UniProtKB-SubCell"/>
</dbReference>
<dbReference type="GO" id="GO:0005524">
    <property type="term" value="F:ATP binding"/>
    <property type="evidence" value="ECO:0007669"/>
    <property type="project" value="InterPro"/>
</dbReference>
<dbReference type="GO" id="GO:0046872">
    <property type="term" value="F:metal ion binding"/>
    <property type="evidence" value="ECO:0007669"/>
    <property type="project" value="TreeGrafter"/>
</dbReference>
<dbReference type="GO" id="GO:0044183">
    <property type="term" value="F:protein folding chaperone"/>
    <property type="evidence" value="ECO:0007669"/>
    <property type="project" value="InterPro"/>
</dbReference>
<dbReference type="GO" id="GO:0051087">
    <property type="term" value="F:protein-folding chaperone binding"/>
    <property type="evidence" value="ECO:0007669"/>
    <property type="project" value="TreeGrafter"/>
</dbReference>
<dbReference type="GO" id="GO:0051082">
    <property type="term" value="F:unfolded protein binding"/>
    <property type="evidence" value="ECO:0007669"/>
    <property type="project" value="TreeGrafter"/>
</dbReference>
<dbReference type="GO" id="GO:0051085">
    <property type="term" value="P:chaperone cofactor-dependent protein refolding"/>
    <property type="evidence" value="ECO:0007669"/>
    <property type="project" value="TreeGrafter"/>
</dbReference>
<dbReference type="CDD" id="cd00320">
    <property type="entry name" value="cpn10"/>
    <property type="match status" value="1"/>
</dbReference>
<dbReference type="FunFam" id="2.30.33.40:FF:000001">
    <property type="entry name" value="10 kDa chaperonin"/>
    <property type="match status" value="1"/>
</dbReference>
<dbReference type="Gene3D" id="2.30.33.40">
    <property type="entry name" value="GroES chaperonin"/>
    <property type="match status" value="1"/>
</dbReference>
<dbReference type="HAMAP" id="MF_00580">
    <property type="entry name" value="CH10"/>
    <property type="match status" value="1"/>
</dbReference>
<dbReference type="InterPro" id="IPR020818">
    <property type="entry name" value="Chaperonin_GroES"/>
</dbReference>
<dbReference type="InterPro" id="IPR037124">
    <property type="entry name" value="Chaperonin_GroES_sf"/>
</dbReference>
<dbReference type="InterPro" id="IPR018369">
    <property type="entry name" value="Chaprnonin_Cpn10_CS"/>
</dbReference>
<dbReference type="InterPro" id="IPR011032">
    <property type="entry name" value="GroES-like_sf"/>
</dbReference>
<dbReference type="NCBIfam" id="NF001527">
    <property type="entry name" value="PRK00364.1-2"/>
    <property type="match status" value="1"/>
</dbReference>
<dbReference type="NCBIfam" id="NF001531">
    <property type="entry name" value="PRK00364.2-2"/>
    <property type="match status" value="1"/>
</dbReference>
<dbReference type="NCBIfam" id="NF001533">
    <property type="entry name" value="PRK00364.2-4"/>
    <property type="match status" value="1"/>
</dbReference>
<dbReference type="NCBIfam" id="NF001534">
    <property type="entry name" value="PRK00364.2-5"/>
    <property type="match status" value="1"/>
</dbReference>
<dbReference type="PANTHER" id="PTHR10772">
    <property type="entry name" value="10 KDA HEAT SHOCK PROTEIN"/>
    <property type="match status" value="1"/>
</dbReference>
<dbReference type="PANTHER" id="PTHR10772:SF58">
    <property type="entry name" value="CO-CHAPERONIN GROES"/>
    <property type="match status" value="1"/>
</dbReference>
<dbReference type="Pfam" id="PF00166">
    <property type="entry name" value="Cpn10"/>
    <property type="match status" value="1"/>
</dbReference>
<dbReference type="PRINTS" id="PR00297">
    <property type="entry name" value="CHAPERONIN10"/>
</dbReference>
<dbReference type="SMART" id="SM00883">
    <property type="entry name" value="Cpn10"/>
    <property type="match status" value="1"/>
</dbReference>
<dbReference type="SUPFAM" id="SSF50129">
    <property type="entry name" value="GroES-like"/>
    <property type="match status" value="1"/>
</dbReference>
<dbReference type="PROSITE" id="PS00681">
    <property type="entry name" value="CHAPERONINS_CPN10"/>
    <property type="match status" value="1"/>
</dbReference>